<keyword id="KW-0067">ATP-binding</keyword>
<keyword id="KW-0131">Cell cycle</keyword>
<keyword id="KW-0132">Cell division</keyword>
<keyword id="KW-0133">Cell shape</keyword>
<keyword id="KW-0961">Cell wall biogenesis/degradation</keyword>
<keyword id="KW-0963">Cytoplasm</keyword>
<keyword id="KW-0436">Ligase</keyword>
<keyword id="KW-0547">Nucleotide-binding</keyword>
<keyword id="KW-0573">Peptidoglycan synthesis</keyword>
<keyword id="KW-1185">Reference proteome</keyword>
<proteinExistence type="inferred from homology"/>
<dbReference type="EC" id="6.3.2.8" evidence="1"/>
<dbReference type="EMBL" id="CP000611">
    <property type="protein sequence ID" value="ABQ73929.1"/>
    <property type="molecule type" value="Genomic_DNA"/>
</dbReference>
<dbReference type="RefSeq" id="WP_003411159.1">
    <property type="nucleotide sequence ID" value="NZ_CP016972.1"/>
</dbReference>
<dbReference type="SMR" id="A5U4H9"/>
<dbReference type="KEGG" id="mra:MRA_2167"/>
<dbReference type="eggNOG" id="COG0773">
    <property type="taxonomic scope" value="Bacteria"/>
</dbReference>
<dbReference type="HOGENOM" id="CLU_028104_2_2_11"/>
<dbReference type="UniPathway" id="UPA00219"/>
<dbReference type="Proteomes" id="UP000001988">
    <property type="component" value="Chromosome"/>
</dbReference>
<dbReference type="GO" id="GO:0005737">
    <property type="term" value="C:cytoplasm"/>
    <property type="evidence" value="ECO:0007669"/>
    <property type="project" value="UniProtKB-SubCell"/>
</dbReference>
<dbReference type="GO" id="GO:0005524">
    <property type="term" value="F:ATP binding"/>
    <property type="evidence" value="ECO:0007669"/>
    <property type="project" value="UniProtKB-UniRule"/>
</dbReference>
<dbReference type="GO" id="GO:0008763">
    <property type="term" value="F:UDP-N-acetylmuramate-L-alanine ligase activity"/>
    <property type="evidence" value="ECO:0007669"/>
    <property type="project" value="UniProtKB-UniRule"/>
</dbReference>
<dbReference type="GO" id="GO:0051301">
    <property type="term" value="P:cell division"/>
    <property type="evidence" value="ECO:0007669"/>
    <property type="project" value="UniProtKB-KW"/>
</dbReference>
<dbReference type="GO" id="GO:0071555">
    <property type="term" value="P:cell wall organization"/>
    <property type="evidence" value="ECO:0007669"/>
    <property type="project" value="UniProtKB-KW"/>
</dbReference>
<dbReference type="GO" id="GO:0009252">
    <property type="term" value="P:peptidoglycan biosynthetic process"/>
    <property type="evidence" value="ECO:0007669"/>
    <property type="project" value="UniProtKB-UniRule"/>
</dbReference>
<dbReference type="GO" id="GO:0008360">
    <property type="term" value="P:regulation of cell shape"/>
    <property type="evidence" value="ECO:0007669"/>
    <property type="project" value="UniProtKB-KW"/>
</dbReference>
<dbReference type="FunFam" id="3.40.50.720:FF:000046">
    <property type="entry name" value="UDP-N-acetylmuramate--L-alanine ligase"/>
    <property type="match status" value="1"/>
</dbReference>
<dbReference type="FunFam" id="3.90.190.20:FF:000016">
    <property type="entry name" value="UDP-N-acetylmuramate--L-alanine ligase"/>
    <property type="match status" value="1"/>
</dbReference>
<dbReference type="Gene3D" id="3.90.190.20">
    <property type="entry name" value="Mur ligase, C-terminal domain"/>
    <property type="match status" value="1"/>
</dbReference>
<dbReference type="Gene3D" id="3.40.1190.10">
    <property type="entry name" value="Mur-like, catalytic domain"/>
    <property type="match status" value="1"/>
</dbReference>
<dbReference type="Gene3D" id="3.40.50.720">
    <property type="entry name" value="NAD(P)-binding Rossmann-like Domain"/>
    <property type="match status" value="1"/>
</dbReference>
<dbReference type="HAMAP" id="MF_00046">
    <property type="entry name" value="MurC"/>
    <property type="match status" value="1"/>
</dbReference>
<dbReference type="InterPro" id="IPR036565">
    <property type="entry name" value="Mur-like_cat_sf"/>
</dbReference>
<dbReference type="InterPro" id="IPR004101">
    <property type="entry name" value="Mur_ligase_C"/>
</dbReference>
<dbReference type="InterPro" id="IPR036615">
    <property type="entry name" value="Mur_ligase_C_dom_sf"/>
</dbReference>
<dbReference type="InterPro" id="IPR013221">
    <property type="entry name" value="Mur_ligase_cen"/>
</dbReference>
<dbReference type="InterPro" id="IPR000713">
    <property type="entry name" value="Mur_ligase_N"/>
</dbReference>
<dbReference type="InterPro" id="IPR050061">
    <property type="entry name" value="MurCDEF_pg_biosynth"/>
</dbReference>
<dbReference type="InterPro" id="IPR005758">
    <property type="entry name" value="UDP-N-AcMur_Ala_ligase_MurC"/>
</dbReference>
<dbReference type="NCBIfam" id="TIGR01082">
    <property type="entry name" value="murC"/>
    <property type="match status" value="1"/>
</dbReference>
<dbReference type="PANTHER" id="PTHR43445:SF3">
    <property type="entry name" value="UDP-N-ACETYLMURAMATE--L-ALANINE LIGASE"/>
    <property type="match status" value="1"/>
</dbReference>
<dbReference type="PANTHER" id="PTHR43445">
    <property type="entry name" value="UDP-N-ACETYLMURAMATE--L-ALANINE LIGASE-RELATED"/>
    <property type="match status" value="1"/>
</dbReference>
<dbReference type="Pfam" id="PF01225">
    <property type="entry name" value="Mur_ligase"/>
    <property type="match status" value="1"/>
</dbReference>
<dbReference type="Pfam" id="PF02875">
    <property type="entry name" value="Mur_ligase_C"/>
    <property type="match status" value="1"/>
</dbReference>
<dbReference type="Pfam" id="PF08245">
    <property type="entry name" value="Mur_ligase_M"/>
    <property type="match status" value="1"/>
</dbReference>
<dbReference type="SUPFAM" id="SSF51984">
    <property type="entry name" value="MurCD N-terminal domain"/>
    <property type="match status" value="1"/>
</dbReference>
<dbReference type="SUPFAM" id="SSF53623">
    <property type="entry name" value="MurD-like peptide ligases, catalytic domain"/>
    <property type="match status" value="1"/>
</dbReference>
<dbReference type="SUPFAM" id="SSF53244">
    <property type="entry name" value="MurD-like peptide ligases, peptide-binding domain"/>
    <property type="match status" value="1"/>
</dbReference>
<sequence length="494" mass="51177">MSTEQLPPDLRRVHMVGIGGAGMSGIARILLDRGGLVSGSDAKESRGVHALRARGALIRIGHDASSLDLLPGGATAVVTTHAAIPKTNPELVEARRRGIPVVLRPAVLAKLMAGRTTLMVTGTHGKTTTTSMLIVALQHCGLDPSFAVGGELGEAGTNAHHGSGDCFVAEADESDGSLLQYTPHVAVITNIESDHLDFYGSVEAYVAVFDSFVERIVPGGALVVCTDDPGGAALAQRATELGIRVLRYGSVPGETMAATLVSWQQQGVGAVAHIRLASELATAQGPRVMRLSVPGRHMALNALGALLAAVQIGAPADEVLDGLAGFEGVRRRFELVGTCGVGKASVRVFDDYAHHPTEISATLAAARMVLEQGDGGRCMVVFQPHLYSRTKAFAAEFGRALNAADEVFVLDVYGAREQPLAGVSGASVAEHVTVPMRYVPDFSAVAQQVAAAASPGDVIVTMGAGDVTLLGPEILTALRVRANRSAPGRPGVLG</sequence>
<accession>A5U4H9</accession>
<name>MURC_MYCTA</name>
<evidence type="ECO:0000255" key="1">
    <source>
        <dbReference type="HAMAP-Rule" id="MF_00046"/>
    </source>
</evidence>
<organism>
    <name type="scientific">Mycobacterium tuberculosis (strain ATCC 25177 / H37Ra)</name>
    <dbReference type="NCBI Taxonomy" id="419947"/>
    <lineage>
        <taxon>Bacteria</taxon>
        <taxon>Bacillati</taxon>
        <taxon>Actinomycetota</taxon>
        <taxon>Actinomycetes</taxon>
        <taxon>Mycobacteriales</taxon>
        <taxon>Mycobacteriaceae</taxon>
        <taxon>Mycobacterium</taxon>
        <taxon>Mycobacterium tuberculosis complex</taxon>
    </lineage>
</organism>
<protein>
    <recommendedName>
        <fullName evidence="1">UDP-N-acetylmuramate--L-alanine ligase</fullName>
        <ecNumber evidence="1">6.3.2.8</ecNumber>
    </recommendedName>
    <alternativeName>
        <fullName evidence="1">UDP-N-acetylmuramoyl-L-alanine synthetase</fullName>
    </alternativeName>
</protein>
<feature type="chain" id="PRO_1000004376" description="UDP-N-acetylmuramate--L-alanine ligase">
    <location>
        <begin position="1"/>
        <end position="494"/>
    </location>
</feature>
<feature type="binding site" evidence="1">
    <location>
        <begin position="122"/>
        <end position="128"/>
    </location>
    <ligand>
        <name>ATP</name>
        <dbReference type="ChEBI" id="CHEBI:30616"/>
    </ligand>
</feature>
<gene>
    <name evidence="1" type="primary">murC</name>
    <name type="ordered locus">MRA_2167</name>
</gene>
<comment type="function">
    <text evidence="1">Cell wall formation.</text>
</comment>
<comment type="catalytic activity">
    <reaction evidence="1">
        <text>UDP-N-acetyl-alpha-D-muramate + L-alanine + ATP = UDP-N-acetyl-alpha-D-muramoyl-L-alanine + ADP + phosphate + H(+)</text>
        <dbReference type="Rhea" id="RHEA:23372"/>
        <dbReference type="ChEBI" id="CHEBI:15378"/>
        <dbReference type="ChEBI" id="CHEBI:30616"/>
        <dbReference type="ChEBI" id="CHEBI:43474"/>
        <dbReference type="ChEBI" id="CHEBI:57972"/>
        <dbReference type="ChEBI" id="CHEBI:70757"/>
        <dbReference type="ChEBI" id="CHEBI:83898"/>
        <dbReference type="ChEBI" id="CHEBI:456216"/>
        <dbReference type="EC" id="6.3.2.8"/>
    </reaction>
</comment>
<comment type="pathway">
    <text evidence="1">Cell wall biogenesis; peptidoglycan biosynthesis.</text>
</comment>
<comment type="subcellular location">
    <subcellularLocation>
        <location evidence="1">Cytoplasm</location>
    </subcellularLocation>
</comment>
<comment type="similarity">
    <text evidence="1">Belongs to the MurCDEF family.</text>
</comment>
<reference key="1">
    <citation type="journal article" date="2008" name="PLoS ONE">
        <title>Genetic basis of virulence attenuation revealed by comparative genomic analysis of Mycobacterium tuberculosis strain H37Ra versus H37Rv.</title>
        <authorList>
            <person name="Zheng H."/>
            <person name="Lu L."/>
            <person name="Wang B."/>
            <person name="Pu S."/>
            <person name="Zhang X."/>
            <person name="Zhu G."/>
            <person name="Shi W."/>
            <person name="Zhang L."/>
            <person name="Wang H."/>
            <person name="Wang S."/>
            <person name="Zhao G."/>
            <person name="Zhang Y."/>
        </authorList>
    </citation>
    <scope>NUCLEOTIDE SEQUENCE [LARGE SCALE GENOMIC DNA]</scope>
    <source>
        <strain>ATCC 25177 / H37Ra</strain>
    </source>
</reference>